<protein>
    <recommendedName>
        <fullName evidence="1">Ribosomal RNA large subunit methyltransferase H</fullName>
        <ecNumber evidence="1">2.1.1.177</ecNumber>
    </recommendedName>
    <alternativeName>
        <fullName evidence="1">23S rRNA (pseudouridine1915-N3)-methyltransferase</fullName>
    </alternativeName>
    <alternativeName>
        <fullName evidence="1">23S rRNA m3Psi1915 methyltransferase</fullName>
    </alternativeName>
    <alternativeName>
        <fullName evidence="1">rRNA (pseudouridine-N3-)-methyltransferase RlmH</fullName>
    </alternativeName>
</protein>
<name>RLMH_MANSM</name>
<gene>
    <name evidence="1" type="primary">rlmH</name>
    <name type="ordered locus">MS1833</name>
</gene>
<evidence type="ECO:0000255" key="1">
    <source>
        <dbReference type="HAMAP-Rule" id="MF_00658"/>
    </source>
</evidence>
<keyword id="KW-0963">Cytoplasm</keyword>
<keyword id="KW-0489">Methyltransferase</keyword>
<keyword id="KW-0698">rRNA processing</keyword>
<keyword id="KW-0949">S-adenosyl-L-methionine</keyword>
<keyword id="KW-0808">Transferase</keyword>
<reference key="1">
    <citation type="journal article" date="2004" name="Nat. Biotechnol.">
        <title>The genome sequence of the capnophilic rumen bacterium Mannheimia succiniciproducens.</title>
        <authorList>
            <person name="Hong S.H."/>
            <person name="Kim J.S."/>
            <person name="Lee S.Y."/>
            <person name="In Y.H."/>
            <person name="Choi S.S."/>
            <person name="Rih J.-K."/>
            <person name="Kim C.H."/>
            <person name="Jeong H."/>
            <person name="Hur C.G."/>
            <person name="Kim J.J."/>
        </authorList>
    </citation>
    <scope>NUCLEOTIDE SEQUENCE [LARGE SCALE GENOMIC DNA]</scope>
    <source>
        <strain>KCTC 0769BP / MBEL55E</strain>
    </source>
</reference>
<organism>
    <name type="scientific">Mannheimia succiniciproducens (strain KCTC 0769BP / MBEL55E)</name>
    <dbReference type="NCBI Taxonomy" id="221988"/>
    <lineage>
        <taxon>Bacteria</taxon>
        <taxon>Pseudomonadati</taxon>
        <taxon>Pseudomonadota</taxon>
        <taxon>Gammaproteobacteria</taxon>
        <taxon>Pasteurellales</taxon>
        <taxon>Pasteurellaceae</taxon>
        <taxon>Basfia</taxon>
    </lineage>
</organism>
<feature type="chain" id="PRO_0000198141" description="Ribosomal RNA large subunit methyltransferase H">
    <location>
        <begin position="1"/>
        <end position="155"/>
    </location>
</feature>
<feature type="binding site" evidence="1">
    <location>
        <position position="72"/>
    </location>
    <ligand>
        <name>S-adenosyl-L-methionine</name>
        <dbReference type="ChEBI" id="CHEBI:59789"/>
    </ligand>
</feature>
<feature type="binding site" evidence="1">
    <location>
        <position position="103"/>
    </location>
    <ligand>
        <name>S-adenosyl-L-methionine</name>
        <dbReference type="ChEBI" id="CHEBI:59789"/>
    </ligand>
</feature>
<feature type="binding site" evidence="1">
    <location>
        <begin position="122"/>
        <end position="127"/>
    </location>
    <ligand>
        <name>S-adenosyl-L-methionine</name>
        <dbReference type="ChEBI" id="CHEBI:59789"/>
    </ligand>
</feature>
<sequence>MKIQLIAVGTKMPDWVKVGFEEYQRRFPKDMPFELIEIPAGKRGKNADIKRILEQEGKAMLSACGRGKVVTLDIPGKPWTTDQLARQLESWKNDGRDICLLIGGPEGLSPECKAAAEQSWSLSPLTLPHPLVRVVVAESVYRAWSLTTNHPYHRE</sequence>
<accession>Q65RH0</accession>
<dbReference type="EC" id="2.1.1.177" evidence="1"/>
<dbReference type="EMBL" id="AE016827">
    <property type="protein sequence ID" value="AAU38440.1"/>
    <property type="molecule type" value="Genomic_DNA"/>
</dbReference>
<dbReference type="RefSeq" id="WP_011200996.1">
    <property type="nucleotide sequence ID" value="NC_006300.1"/>
</dbReference>
<dbReference type="SMR" id="Q65RH0"/>
<dbReference type="STRING" id="221988.MS1833"/>
<dbReference type="KEGG" id="msu:MS1833"/>
<dbReference type="eggNOG" id="COG1576">
    <property type="taxonomic scope" value="Bacteria"/>
</dbReference>
<dbReference type="HOGENOM" id="CLU_100552_1_0_6"/>
<dbReference type="OrthoDB" id="9806643at2"/>
<dbReference type="Proteomes" id="UP000000607">
    <property type="component" value="Chromosome"/>
</dbReference>
<dbReference type="GO" id="GO:0005737">
    <property type="term" value="C:cytoplasm"/>
    <property type="evidence" value="ECO:0007669"/>
    <property type="project" value="UniProtKB-SubCell"/>
</dbReference>
<dbReference type="GO" id="GO:0070038">
    <property type="term" value="F:rRNA (pseudouridine-N3-)-methyltransferase activity"/>
    <property type="evidence" value="ECO:0007669"/>
    <property type="project" value="UniProtKB-UniRule"/>
</dbReference>
<dbReference type="CDD" id="cd18081">
    <property type="entry name" value="RlmH-like"/>
    <property type="match status" value="1"/>
</dbReference>
<dbReference type="Gene3D" id="3.40.1280.10">
    <property type="match status" value="1"/>
</dbReference>
<dbReference type="HAMAP" id="MF_00658">
    <property type="entry name" value="23SrRNA_methyltr_H"/>
    <property type="match status" value="1"/>
</dbReference>
<dbReference type="InterPro" id="IPR029028">
    <property type="entry name" value="Alpha/beta_knot_MTases"/>
</dbReference>
<dbReference type="InterPro" id="IPR003742">
    <property type="entry name" value="RlmH-like"/>
</dbReference>
<dbReference type="InterPro" id="IPR029026">
    <property type="entry name" value="tRNA_m1G_MTases_N"/>
</dbReference>
<dbReference type="NCBIfam" id="NF000984">
    <property type="entry name" value="PRK00103.1-1"/>
    <property type="match status" value="1"/>
</dbReference>
<dbReference type="NCBIfam" id="NF000986">
    <property type="entry name" value="PRK00103.1-4"/>
    <property type="match status" value="1"/>
</dbReference>
<dbReference type="NCBIfam" id="TIGR00246">
    <property type="entry name" value="tRNA_RlmH_YbeA"/>
    <property type="match status" value="1"/>
</dbReference>
<dbReference type="PANTHER" id="PTHR33603">
    <property type="entry name" value="METHYLTRANSFERASE"/>
    <property type="match status" value="1"/>
</dbReference>
<dbReference type="PANTHER" id="PTHR33603:SF1">
    <property type="entry name" value="RIBOSOMAL RNA LARGE SUBUNIT METHYLTRANSFERASE H"/>
    <property type="match status" value="1"/>
</dbReference>
<dbReference type="Pfam" id="PF02590">
    <property type="entry name" value="SPOUT_MTase"/>
    <property type="match status" value="1"/>
</dbReference>
<dbReference type="PIRSF" id="PIRSF004505">
    <property type="entry name" value="MT_bac"/>
    <property type="match status" value="1"/>
</dbReference>
<dbReference type="SUPFAM" id="SSF75217">
    <property type="entry name" value="alpha/beta knot"/>
    <property type="match status" value="1"/>
</dbReference>
<proteinExistence type="inferred from homology"/>
<comment type="function">
    <text evidence="1">Specifically methylates the pseudouridine at position 1915 (m3Psi1915) in 23S rRNA.</text>
</comment>
<comment type="catalytic activity">
    <reaction evidence="1">
        <text>pseudouridine(1915) in 23S rRNA + S-adenosyl-L-methionine = N(3)-methylpseudouridine(1915) in 23S rRNA + S-adenosyl-L-homocysteine + H(+)</text>
        <dbReference type="Rhea" id="RHEA:42752"/>
        <dbReference type="Rhea" id="RHEA-COMP:10221"/>
        <dbReference type="Rhea" id="RHEA-COMP:10222"/>
        <dbReference type="ChEBI" id="CHEBI:15378"/>
        <dbReference type="ChEBI" id="CHEBI:57856"/>
        <dbReference type="ChEBI" id="CHEBI:59789"/>
        <dbReference type="ChEBI" id="CHEBI:65314"/>
        <dbReference type="ChEBI" id="CHEBI:74486"/>
        <dbReference type="EC" id="2.1.1.177"/>
    </reaction>
</comment>
<comment type="subunit">
    <text evidence="1">Homodimer.</text>
</comment>
<comment type="subcellular location">
    <subcellularLocation>
        <location evidence="1">Cytoplasm</location>
    </subcellularLocation>
</comment>
<comment type="similarity">
    <text evidence="1">Belongs to the RNA methyltransferase RlmH family.</text>
</comment>